<feature type="chain" id="PRO_0000321591" description="Dihydroxy-acid dehydratase">
    <location>
        <begin position="1"/>
        <end position="573"/>
    </location>
</feature>
<feature type="active site" description="Proton acceptor" evidence="1">
    <location>
        <position position="489"/>
    </location>
</feature>
<feature type="binding site" evidence="1">
    <location>
        <position position="62"/>
    </location>
    <ligand>
        <name>[2Fe-2S] cluster</name>
        <dbReference type="ChEBI" id="CHEBI:190135"/>
    </ligand>
</feature>
<feature type="binding site" evidence="1">
    <location>
        <position position="94"/>
    </location>
    <ligand>
        <name>Mg(2+)</name>
        <dbReference type="ChEBI" id="CHEBI:18420"/>
    </ligand>
</feature>
<feature type="binding site" evidence="1">
    <location>
        <position position="135"/>
    </location>
    <ligand>
        <name>[2Fe-2S] cluster</name>
        <dbReference type="ChEBI" id="CHEBI:190135"/>
    </ligand>
</feature>
<feature type="binding site" evidence="1">
    <location>
        <position position="136"/>
    </location>
    <ligand>
        <name>Mg(2+)</name>
        <dbReference type="ChEBI" id="CHEBI:18420"/>
    </ligand>
</feature>
<feature type="binding site" description="via carbamate group" evidence="1">
    <location>
        <position position="137"/>
    </location>
    <ligand>
        <name>Mg(2+)</name>
        <dbReference type="ChEBI" id="CHEBI:18420"/>
    </ligand>
</feature>
<feature type="binding site" evidence="1">
    <location>
        <position position="212"/>
    </location>
    <ligand>
        <name>[2Fe-2S] cluster</name>
        <dbReference type="ChEBI" id="CHEBI:190135"/>
    </ligand>
</feature>
<feature type="binding site" evidence="1">
    <location>
        <position position="463"/>
    </location>
    <ligand>
        <name>Mg(2+)</name>
        <dbReference type="ChEBI" id="CHEBI:18420"/>
    </ligand>
</feature>
<feature type="modified residue" description="N6-carboxylysine" evidence="1">
    <location>
        <position position="137"/>
    </location>
</feature>
<proteinExistence type="inferred from homology"/>
<comment type="function">
    <text evidence="1">Functions in the biosynthesis of branched-chain amino acids. Catalyzes the dehydration of (2R,3R)-2,3-dihydroxy-3-methylpentanoate (2,3-dihydroxy-3-methylvalerate) into 2-oxo-3-methylpentanoate (2-oxo-3-methylvalerate) and of (2R)-2,3-dihydroxy-3-methylbutanoate (2,3-dihydroxyisovalerate) into 2-oxo-3-methylbutanoate (2-oxoisovalerate), the penultimate precursor to L-isoleucine and L-valine, respectively.</text>
</comment>
<comment type="catalytic activity">
    <reaction evidence="1">
        <text>(2R)-2,3-dihydroxy-3-methylbutanoate = 3-methyl-2-oxobutanoate + H2O</text>
        <dbReference type="Rhea" id="RHEA:24809"/>
        <dbReference type="ChEBI" id="CHEBI:11851"/>
        <dbReference type="ChEBI" id="CHEBI:15377"/>
        <dbReference type="ChEBI" id="CHEBI:49072"/>
        <dbReference type="EC" id="4.2.1.9"/>
    </reaction>
    <physiologicalReaction direction="left-to-right" evidence="1">
        <dbReference type="Rhea" id="RHEA:24810"/>
    </physiologicalReaction>
</comment>
<comment type="catalytic activity">
    <reaction evidence="1">
        <text>(2R,3R)-2,3-dihydroxy-3-methylpentanoate = (S)-3-methyl-2-oxopentanoate + H2O</text>
        <dbReference type="Rhea" id="RHEA:27694"/>
        <dbReference type="ChEBI" id="CHEBI:15377"/>
        <dbReference type="ChEBI" id="CHEBI:35146"/>
        <dbReference type="ChEBI" id="CHEBI:49258"/>
        <dbReference type="EC" id="4.2.1.9"/>
    </reaction>
    <physiologicalReaction direction="left-to-right" evidence="1">
        <dbReference type="Rhea" id="RHEA:27695"/>
    </physiologicalReaction>
</comment>
<comment type="cofactor">
    <cofactor evidence="1">
        <name>[2Fe-2S] cluster</name>
        <dbReference type="ChEBI" id="CHEBI:190135"/>
    </cofactor>
    <text evidence="1">Binds 1 [2Fe-2S] cluster per subunit. This cluster acts as a Lewis acid cofactor.</text>
</comment>
<comment type="cofactor">
    <cofactor evidence="1">
        <name>Mg(2+)</name>
        <dbReference type="ChEBI" id="CHEBI:18420"/>
    </cofactor>
</comment>
<comment type="pathway">
    <text evidence="1">Amino-acid biosynthesis; L-isoleucine biosynthesis; L-isoleucine from 2-oxobutanoate: step 3/4.</text>
</comment>
<comment type="pathway">
    <text evidence="1">Amino-acid biosynthesis; L-valine biosynthesis; L-valine from pyruvate: step 3/4.</text>
</comment>
<comment type="subunit">
    <text evidence="1">Homodimer.</text>
</comment>
<comment type="similarity">
    <text evidence="1">Belongs to the IlvD/Edd family.</text>
</comment>
<keyword id="KW-0001">2Fe-2S</keyword>
<keyword id="KW-0028">Amino-acid biosynthesis</keyword>
<keyword id="KW-0100">Branched-chain amino acid biosynthesis</keyword>
<keyword id="KW-0408">Iron</keyword>
<keyword id="KW-0411">Iron-sulfur</keyword>
<keyword id="KW-0456">Lyase</keyword>
<keyword id="KW-0460">Magnesium</keyword>
<keyword id="KW-0479">Metal-binding</keyword>
<keyword id="KW-1185">Reference proteome</keyword>
<evidence type="ECO:0000255" key="1">
    <source>
        <dbReference type="HAMAP-Rule" id="MF_00012"/>
    </source>
</evidence>
<reference key="1">
    <citation type="journal article" date="2013" name="Stand. Genomic Sci.">
        <title>Complete genome sequence of Arthrobacter sp. strain FB24.</title>
        <authorList>
            <person name="Nakatsu C.H."/>
            <person name="Barabote R."/>
            <person name="Thompson S."/>
            <person name="Bruce D."/>
            <person name="Detter C."/>
            <person name="Brettin T."/>
            <person name="Han C."/>
            <person name="Beasley F."/>
            <person name="Chen W."/>
            <person name="Konopka A."/>
            <person name="Xie G."/>
        </authorList>
    </citation>
    <scope>NUCLEOTIDE SEQUENCE [LARGE SCALE GENOMIC DNA]</scope>
    <source>
        <strain>FB24</strain>
    </source>
</reference>
<protein>
    <recommendedName>
        <fullName evidence="1">Dihydroxy-acid dehydratase</fullName>
        <shortName evidence="1">DAD</shortName>
        <ecNumber evidence="1">4.2.1.9</ecNumber>
    </recommendedName>
</protein>
<dbReference type="EC" id="4.2.1.9" evidence="1"/>
<dbReference type="EMBL" id="CP000454">
    <property type="protein sequence ID" value="ABK03919.1"/>
    <property type="molecule type" value="Genomic_DNA"/>
</dbReference>
<dbReference type="RefSeq" id="WP_011692381.1">
    <property type="nucleotide sequence ID" value="NC_008541.1"/>
</dbReference>
<dbReference type="SMR" id="A0JXZ9"/>
<dbReference type="STRING" id="290399.Arth_2540"/>
<dbReference type="KEGG" id="art:Arth_2540"/>
<dbReference type="eggNOG" id="COG0129">
    <property type="taxonomic scope" value="Bacteria"/>
</dbReference>
<dbReference type="HOGENOM" id="CLU_014271_4_2_11"/>
<dbReference type="OrthoDB" id="9807077at2"/>
<dbReference type="UniPathway" id="UPA00047">
    <property type="reaction ID" value="UER00057"/>
</dbReference>
<dbReference type="UniPathway" id="UPA00049">
    <property type="reaction ID" value="UER00061"/>
</dbReference>
<dbReference type="Proteomes" id="UP000000754">
    <property type="component" value="Chromosome"/>
</dbReference>
<dbReference type="GO" id="GO:0051537">
    <property type="term" value="F:2 iron, 2 sulfur cluster binding"/>
    <property type="evidence" value="ECO:0007669"/>
    <property type="project" value="UniProtKB-UniRule"/>
</dbReference>
<dbReference type="GO" id="GO:0004160">
    <property type="term" value="F:dihydroxy-acid dehydratase activity"/>
    <property type="evidence" value="ECO:0007669"/>
    <property type="project" value="UniProtKB-UniRule"/>
</dbReference>
<dbReference type="GO" id="GO:0000287">
    <property type="term" value="F:magnesium ion binding"/>
    <property type="evidence" value="ECO:0007669"/>
    <property type="project" value="UniProtKB-UniRule"/>
</dbReference>
<dbReference type="GO" id="GO:0009097">
    <property type="term" value="P:isoleucine biosynthetic process"/>
    <property type="evidence" value="ECO:0007669"/>
    <property type="project" value="UniProtKB-UniRule"/>
</dbReference>
<dbReference type="GO" id="GO:0009099">
    <property type="term" value="P:L-valine biosynthetic process"/>
    <property type="evidence" value="ECO:0007669"/>
    <property type="project" value="UniProtKB-UniRule"/>
</dbReference>
<dbReference type="FunFam" id="3.50.30.80:FF:000001">
    <property type="entry name" value="Dihydroxy-acid dehydratase"/>
    <property type="match status" value="1"/>
</dbReference>
<dbReference type="Gene3D" id="3.50.30.80">
    <property type="entry name" value="IlvD/EDD C-terminal domain-like"/>
    <property type="match status" value="1"/>
</dbReference>
<dbReference type="HAMAP" id="MF_00012">
    <property type="entry name" value="IlvD"/>
    <property type="match status" value="1"/>
</dbReference>
<dbReference type="InterPro" id="IPR050165">
    <property type="entry name" value="DHAD_IlvD/Edd"/>
</dbReference>
<dbReference type="InterPro" id="IPR042096">
    <property type="entry name" value="Dihydro-acid_dehy_C"/>
</dbReference>
<dbReference type="InterPro" id="IPR004404">
    <property type="entry name" value="DihydroxyA_deHydtase"/>
</dbReference>
<dbReference type="InterPro" id="IPR020558">
    <property type="entry name" value="DiOHA_6PGluconate_deHydtase_CS"/>
</dbReference>
<dbReference type="InterPro" id="IPR056740">
    <property type="entry name" value="ILV_EDD_C"/>
</dbReference>
<dbReference type="InterPro" id="IPR000581">
    <property type="entry name" value="ILV_EDD_N"/>
</dbReference>
<dbReference type="InterPro" id="IPR037237">
    <property type="entry name" value="IlvD/EDD_N"/>
</dbReference>
<dbReference type="NCBIfam" id="TIGR00110">
    <property type="entry name" value="ilvD"/>
    <property type="match status" value="1"/>
</dbReference>
<dbReference type="NCBIfam" id="NF002068">
    <property type="entry name" value="PRK00911.1"/>
    <property type="match status" value="1"/>
</dbReference>
<dbReference type="PANTHER" id="PTHR21000">
    <property type="entry name" value="DIHYDROXY-ACID DEHYDRATASE DAD"/>
    <property type="match status" value="1"/>
</dbReference>
<dbReference type="PANTHER" id="PTHR21000:SF5">
    <property type="entry name" value="DIHYDROXY-ACID DEHYDRATASE, MITOCHONDRIAL"/>
    <property type="match status" value="1"/>
</dbReference>
<dbReference type="Pfam" id="PF24877">
    <property type="entry name" value="ILV_EDD_C"/>
    <property type="match status" value="1"/>
</dbReference>
<dbReference type="Pfam" id="PF00920">
    <property type="entry name" value="ILVD_EDD_N"/>
    <property type="match status" value="1"/>
</dbReference>
<dbReference type="SUPFAM" id="SSF143975">
    <property type="entry name" value="IlvD/EDD N-terminal domain-like"/>
    <property type="match status" value="1"/>
</dbReference>
<dbReference type="SUPFAM" id="SSF52016">
    <property type="entry name" value="LeuD/IlvD-like"/>
    <property type="match status" value="1"/>
</dbReference>
<dbReference type="PROSITE" id="PS00886">
    <property type="entry name" value="ILVD_EDD_1"/>
    <property type="match status" value="1"/>
</dbReference>
<dbReference type="PROSITE" id="PS00887">
    <property type="entry name" value="ILVD_EDD_2"/>
    <property type="match status" value="1"/>
</dbReference>
<accession>A0JXZ9</accession>
<name>ILVD_ARTS2</name>
<gene>
    <name evidence="1" type="primary">ilvD</name>
    <name type="ordered locus">Arth_2540</name>
</gene>
<organism>
    <name type="scientific">Arthrobacter sp. (strain FB24)</name>
    <dbReference type="NCBI Taxonomy" id="290399"/>
    <lineage>
        <taxon>Bacteria</taxon>
        <taxon>Bacillati</taxon>
        <taxon>Actinomycetota</taxon>
        <taxon>Actinomycetes</taxon>
        <taxon>Micrococcales</taxon>
        <taxon>Micrococcaceae</taxon>
        <taxon>Arthrobacter</taxon>
    </lineage>
</organism>
<sequence length="573" mass="60031">MSEDTQTATENKPDIKPRSRVVTDGIHAAPARGMFRAVGMGDDDFAKPQIGVASSWNEITPCNLSLNRLAQGAKEGVHAGGGFPMQFGTISVSDGISMGHEGMHFSLVSREVIADSVETVMQAERIDGSVLLAGCDKSLPGMLMAAARLDLASVFLYAGSIMPGWVKLEDGSEKEVTLIDAFEAVGACAAGKMSRGDLDRIERAICPGEGACGGMYTANTMACIGEALGMSLPGSAAPPSADRRRDEFARKSGEAVVNLLRLGITARDIMTKKAFENAIAVTMAFGGSTNAVLHLLAIAREAEVELTLDDFNRIGDKIPHLGDLKPFGRYVMTDVDKIGGVPVIMKALLDAGLLHGDCLTVTGKTLAENLASINPPDLDGKILRALDNPIHKTGGITILHGSMAPEGAVVKSAGFDADVFEGTARVFEREQGALDALDNGKINKGDVVVIRYEGPKGGPGMREMLAITGAIKGAGLGKDVLLLTDGRFSGGTTGLCIGHVAPEAVDGGPIAFVKDGDRIRVDIAARSFDLLVDEAELESRKVGWEPLPAKFTKGVLAKYAKLVHSASTGAYCG</sequence>